<sequence>MKSMNIAASSELVSRLSSHRRVVALGDTDFTDVAAVVITAADSRSGILALLKRTGFHLPVFLYSEHAVELPAGVTAVINGNEQQWLELESAACQYEENLLPPFYDTLTQYVEMGNSTFACPGHQHGAFFKKHPAGRHFYDFFGENVFRADMCNADVKLGDLLIHEGSAKDAQKFAAKVFHADKTYFVLNGTSAANKVVTNALLTRGDLVLFDRNNHKSNHHGALIQAGATPVYLEASRNPFGFIGGIDAHCFNEEYLRQQIRDVAPEKADLPRPYRLAIIQLGTYDGTVYNARQVIDTVGHLCDYILFDSAWVGYEQFIPMMADSSPLLLELNENDPGIFVTQSVHKQQAGFSQTSQIHKKDNHIRGQARFCPHKRLNNAFMLHASTSPFYPLFAALDVNAKIHEGESGRRLWAECVEIGIEARKAILARCKLFRPFIPPVVDGKLWQDYPTSVLASDRRFFSFEPGAKWHGFEGYAADQYFVDPCKLLLTTPGIDAETGEYSDFGVPATILAHYLRENGIVPEKCDLNSILFLLTPAESHEKLAQLVAMLAQFEQHIEDDSPLVEVLPSVYNKYPVRYRDYTLRQLCQEMHDLYVSFDVKDLQKAMFRQQSFPSVVMNPQDAHSAYIRGDVELVRIRDAEGRIAAEGALPYPPGVLCVVPGEVWGGAVQRYFLALEEGVNLLPGFSPELQGVYSETDADGVKRLYGYVLK</sequence>
<dbReference type="EC" id="4.1.1.17"/>
<dbReference type="EMBL" id="M33766">
    <property type="protein sequence ID" value="AAA66174.1"/>
    <property type="status" value="ALT_INIT"/>
    <property type="molecule type" value="Genomic_DNA"/>
</dbReference>
<dbReference type="EMBL" id="U28377">
    <property type="protein sequence ID" value="AAA69133.1"/>
    <property type="status" value="ALT_INIT"/>
    <property type="molecule type" value="Genomic_DNA"/>
</dbReference>
<dbReference type="EMBL" id="U00096">
    <property type="protein sequence ID" value="AAC76002.2"/>
    <property type="molecule type" value="Genomic_DNA"/>
</dbReference>
<dbReference type="EMBL" id="AP009048">
    <property type="protein sequence ID" value="BAE77028.1"/>
    <property type="molecule type" value="Genomic_DNA"/>
</dbReference>
<dbReference type="PIR" id="I60729">
    <property type="entry name" value="I60729"/>
</dbReference>
<dbReference type="RefSeq" id="NP_417440.4">
    <property type="nucleotide sequence ID" value="NC_000913.3"/>
</dbReference>
<dbReference type="RefSeq" id="WP_001326492.1">
    <property type="nucleotide sequence ID" value="NZ_LN832404.1"/>
</dbReference>
<dbReference type="SMR" id="P21169"/>
<dbReference type="BioGRID" id="4262354">
    <property type="interactions" value="8"/>
</dbReference>
<dbReference type="DIP" id="DIP-10907N"/>
<dbReference type="FunCoup" id="P21169">
    <property type="interactions" value="125"/>
</dbReference>
<dbReference type="STRING" id="511145.b2965"/>
<dbReference type="jPOST" id="P21169"/>
<dbReference type="PaxDb" id="511145-b2965"/>
<dbReference type="EnsemblBacteria" id="AAC76002">
    <property type="protein sequence ID" value="AAC76002"/>
    <property type="gene ID" value="b2965"/>
</dbReference>
<dbReference type="GeneID" id="947457"/>
<dbReference type="KEGG" id="ecj:JW5482"/>
<dbReference type="KEGG" id="eco:b2965"/>
<dbReference type="KEGG" id="ecoc:C3026_16225"/>
<dbReference type="PATRIC" id="fig|1411691.4.peg.3765"/>
<dbReference type="EchoBASE" id="EB0954"/>
<dbReference type="eggNOG" id="COG1982">
    <property type="taxonomic scope" value="Bacteria"/>
</dbReference>
<dbReference type="HOGENOM" id="CLU_014292_3_0_6"/>
<dbReference type="InParanoid" id="P21169"/>
<dbReference type="OMA" id="FMQHAST"/>
<dbReference type="OrthoDB" id="9761189at2"/>
<dbReference type="PhylomeDB" id="P21169"/>
<dbReference type="BioCyc" id="EcoCyc:ORNDECARBOX-BIO-MONOMER"/>
<dbReference type="BioCyc" id="MetaCyc:ORNDECARBOX-BIO-MONOMER"/>
<dbReference type="BRENDA" id="4.1.1.17">
    <property type="organism ID" value="2026"/>
</dbReference>
<dbReference type="UniPathway" id="UPA00535">
    <property type="reaction ID" value="UER00288"/>
</dbReference>
<dbReference type="PHI-base" id="PHI:9151"/>
<dbReference type="PRO" id="PR:P21169"/>
<dbReference type="Proteomes" id="UP000000625">
    <property type="component" value="Chromosome"/>
</dbReference>
<dbReference type="GO" id="GO:0005829">
    <property type="term" value="C:cytosol"/>
    <property type="evidence" value="ECO:0000314"/>
    <property type="project" value="EcoCyc"/>
</dbReference>
<dbReference type="GO" id="GO:0097216">
    <property type="term" value="F:guanosine tetraphosphate binding"/>
    <property type="evidence" value="ECO:0000314"/>
    <property type="project" value="EcoCyc"/>
</dbReference>
<dbReference type="GO" id="GO:0004586">
    <property type="term" value="F:ornithine decarboxylase activity"/>
    <property type="evidence" value="ECO:0000314"/>
    <property type="project" value="EcoCyc"/>
</dbReference>
<dbReference type="GO" id="GO:0030170">
    <property type="term" value="F:pyridoxal phosphate binding"/>
    <property type="evidence" value="ECO:0000314"/>
    <property type="project" value="EcoCyc"/>
</dbReference>
<dbReference type="GO" id="GO:0033387">
    <property type="term" value="P:putrescine biosynthetic process from arginine, via ornithine"/>
    <property type="evidence" value="ECO:0007669"/>
    <property type="project" value="UniProtKB-UniPathway"/>
</dbReference>
<dbReference type="GO" id="GO:0008295">
    <property type="term" value="P:spermidine biosynthetic process"/>
    <property type="evidence" value="ECO:0000315"/>
    <property type="project" value="EcoCyc"/>
</dbReference>
<dbReference type="CDD" id="cd00615">
    <property type="entry name" value="Orn_deC_like"/>
    <property type="match status" value="1"/>
</dbReference>
<dbReference type="FunFam" id="3.40.640.10:FF:000008">
    <property type="entry name" value="Lysine decarboxylase, inducible"/>
    <property type="match status" value="1"/>
</dbReference>
<dbReference type="FunFam" id="3.90.100.10:FF:000001">
    <property type="entry name" value="Lysine decarboxylase, inducible"/>
    <property type="match status" value="1"/>
</dbReference>
<dbReference type="FunFam" id="3.90.1150.10:FF:000032">
    <property type="entry name" value="Ornithine decarboxylase SpeF"/>
    <property type="match status" value="1"/>
</dbReference>
<dbReference type="FunFam" id="3.40.50.220:FF:000002">
    <property type="entry name" value="Ornithine decarboxylase, constitutive"/>
    <property type="match status" value="1"/>
</dbReference>
<dbReference type="Gene3D" id="3.40.50.220">
    <property type="match status" value="1"/>
</dbReference>
<dbReference type="Gene3D" id="3.90.1150.10">
    <property type="entry name" value="Aspartate Aminotransferase, domain 1"/>
    <property type="match status" value="1"/>
</dbReference>
<dbReference type="Gene3D" id="3.90.100.10">
    <property type="entry name" value="Orn/Lys/Arg decarboxylase, C-terminal domain"/>
    <property type="match status" value="1"/>
</dbReference>
<dbReference type="Gene3D" id="3.40.640.10">
    <property type="entry name" value="Type I PLP-dependent aspartate aminotransferase-like (Major domain)"/>
    <property type="match status" value="1"/>
</dbReference>
<dbReference type="InterPro" id="IPR011006">
    <property type="entry name" value="CheY-like_superfamily"/>
</dbReference>
<dbReference type="InterPro" id="IPR005308">
    <property type="entry name" value="OKR_de-COase_N"/>
</dbReference>
<dbReference type="InterPro" id="IPR011193">
    <property type="entry name" value="Orn/lys/arg_de-COase"/>
</dbReference>
<dbReference type="InterPro" id="IPR000310">
    <property type="entry name" value="Orn/Lys/Arg_deCO2ase_major_dom"/>
</dbReference>
<dbReference type="InterPro" id="IPR027464">
    <property type="entry name" value="Ornithine_deCO2ase_N"/>
</dbReference>
<dbReference type="InterPro" id="IPR008286">
    <property type="entry name" value="Prn/Lys/Arg_de-COase_C"/>
</dbReference>
<dbReference type="InterPro" id="IPR036633">
    <property type="entry name" value="Prn/Lys/Arg_de-COase_C_sf"/>
</dbReference>
<dbReference type="InterPro" id="IPR015424">
    <property type="entry name" value="PyrdxlP-dep_Trfase"/>
</dbReference>
<dbReference type="InterPro" id="IPR015421">
    <property type="entry name" value="PyrdxlP-dep_Trfase_major"/>
</dbReference>
<dbReference type="InterPro" id="IPR015422">
    <property type="entry name" value="PyrdxlP-dep_Trfase_small"/>
</dbReference>
<dbReference type="NCBIfam" id="NF010092">
    <property type="entry name" value="PRK13578.1"/>
    <property type="match status" value="1"/>
</dbReference>
<dbReference type="PANTHER" id="PTHR45229">
    <property type="entry name" value="CONSTITUTIVE ORNITHINE DECARBOXYLASE"/>
    <property type="match status" value="1"/>
</dbReference>
<dbReference type="PANTHER" id="PTHR45229:SF4">
    <property type="entry name" value="CONSTITUTIVE ORNITHINE DECARBOXYLASE"/>
    <property type="match status" value="1"/>
</dbReference>
<dbReference type="Pfam" id="PF01276">
    <property type="entry name" value="OKR_DC_1"/>
    <property type="match status" value="1"/>
</dbReference>
<dbReference type="Pfam" id="PF03711">
    <property type="entry name" value="OKR_DC_1_C"/>
    <property type="match status" value="1"/>
</dbReference>
<dbReference type="Pfam" id="PF03709">
    <property type="entry name" value="OKR_DC_1_N"/>
    <property type="match status" value="1"/>
</dbReference>
<dbReference type="PIRSF" id="PIRSF009393">
    <property type="entry name" value="Orn_decarb"/>
    <property type="match status" value="1"/>
</dbReference>
<dbReference type="SUPFAM" id="SSF52172">
    <property type="entry name" value="CheY-like"/>
    <property type="match status" value="1"/>
</dbReference>
<dbReference type="SUPFAM" id="SSF55904">
    <property type="entry name" value="Ornithine decarboxylase C-terminal domain"/>
    <property type="match status" value="1"/>
</dbReference>
<dbReference type="SUPFAM" id="SSF53383">
    <property type="entry name" value="PLP-dependent transferases"/>
    <property type="match status" value="1"/>
</dbReference>
<dbReference type="PROSITE" id="PS00703">
    <property type="entry name" value="OKR_DC_1"/>
    <property type="match status" value="1"/>
</dbReference>
<proteinExistence type="evidence at protein level"/>
<feature type="chain" id="PRO_0000201134" description="Constitutive ornithine decarboxylase">
    <location>
        <begin position="1"/>
        <end position="711"/>
    </location>
</feature>
<feature type="modified residue" description="N6-(pyridoxal phosphate)lysine" evidence="1">
    <location>
        <position position="347"/>
    </location>
</feature>
<comment type="catalytic activity">
    <reaction>
        <text>L-ornithine + H(+) = putrescine + CO2</text>
        <dbReference type="Rhea" id="RHEA:22964"/>
        <dbReference type="ChEBI" id="CHEBI:15378"/>
        <dbReference type="ChEBI" id="CHEBI:16526"/>
        <dbReference type="ChEBI" id="CHEBI:46911"/>
        <dbReference type="ChEBI" id="CHEBI:326268"/>
        <dbReference type="EC" id="4.1.1.17"/>
    </reaction>
</comment>
<comment type="cofactor">
    <cofactor>
        <name>pyridoxal 5'-phosphate</name>
        <dbReference type="ChEBI" id="CHEBI:597326"/>
    </cofactor>
</comment>
<comment type="pathway">
    <text>Amine and polyamine biosynthesis; putrescine biosynthesis via L-ornithine pathway; putrescine from L-ornithine: step 1/1.</text>
</comment>
<comment type="similarity">
    <text evidence="2">Belongs to the Orn/Lys/Arg decarboxylase class-I family.</text>
</comment>
<comment type="sequence caution" evidence="2">
    <conflict type="erroneous initiation">
        <sequence resource="EMBL-CDS" id="AAA66174"/>
    </conflict>
    <text>Extended N-terminus.</text>
</comment>
<comment type="sequence caution" evidence="2">
    <conflict type="erroneous initiation">
        <sequence resource="EMBL-CDS" id="AAA69133"/>
    </conflict>
    <text>Extended N-terminus.</text>
</comment>
<protein>
    <recommendedName>
        <fullName>Constitutive ornithine decarboxylase</fullName>
        <ecNumber>4.1.1.17</ecNumber>
    </recommendedName>
</protein>
<name>DCOR_ECOLI</name>
<keyword id="KW-0210">Decarboxylase</keyword>
<keyword id="KW-0456">Lyase</keyword>
<keyword id="KW-0663">Pyridoxal phosphate</keyword>
<keyword id="KW-1185">Reference proteome</keyword>
<keyword id="KW-0745">Spermidine biosynthesis</keyword>
<accession>P21169</accession>
<accession>Q2M9M8</accession>
<evidence type="ECO:0000250" key="1"/>
<evidence type="ECO:0000305" key="2"/>
<gene>
    <name type="primary">speC</name>
    <name type="ordered locus">b2965</name>
    <name type="ordered locus">JW5482</name>
</gene>
<reference key="1">
    <citation type="submission" date="1990-05" db="EMBL/GenBank/DDBJ databases">
        <title>Analysis and sequence of the speC (ornithine decarboxylase) gene of Escherichia coli.</title>
        <authorList>
            <person name="Barroso L.A."/>
            <person name="Moore R."/>
            <person name="Wright J."/>
            <person name="Patel T."/>
            <person name="Boyle S.M."/>
        </authorList>
    </citation>
    <scope>NUCLEOTIDE SEQUENCE [GENOMIC DNA]</scope>
</reference>
<reference key="2">
    <citation type="journal article" date="1997" name="Science">
        <title>The complete genome sequence of Escherichia coli K-12.</title>
        <authorList>
            <person name="Blattner F.R."/>
            <person name="Plunkett G. III"/>
            <person name="Bloch C.A."/>
            <person name="Perna N.T."/>
            <person name="Burland V."/>
            <person name="Riley M."/>
            <person name="Collado-Vides J."/>
            <person name="Glasner J.D."/>
            <person name="Rode C.K."/>
            <person name="Mayhew G.F."/>
            <person name="Gregor J."/>
            <person name="Davis N.W."/>
            <person name="Kirkpatrick H.A."/>
            <person name="Goeden M.A."/>
            <person name="Rose D.J."/>
            <person name="Mau B."/>
            <person name="Shao Y."/>
        </authorList>
    </citation>
    <scope>NUCLEOTIDE SEQUENCE [LARGE SCALE GENOMIC DNA]</scope>
    <source>
        <strain>K12 / MG1655 / ATCC 47076</strain>
    </source>
</reference>
<reference key="3">
    <citation type="journal article" date="2006" name="Mol. Syst. Biol.">
        <title>Highly accurate genome sequences of Escherichia coli K-12 strains MG1655 and W3110.</title>
        <authorList>
            <person name="Hayashi K."/>
            <person name="Morooka N."/>
            <person name="Yamamoto Y."/>
            <person name="Fujita K."/>
            <person name="Isono K."/>
            <person name="Choi S."/>
            <person name="Ohtsubo E."/>
            <person name="Baba T."/>
            <person name="Wanner B.L."/>
            <person name="Mori H."/>
            <person name="Horiuchi T."/>
        </authorList>
    </citation>
    <scope>NUCLEOTIDE SEQUENCE [LARGE SCALE GENOMIC DNA]</scope>
    <source>
        <strain>K12 / W3110 / ATCC 27325 / DSM 5911</strain>
    </source>
</reference>
<reference key="4">
    <citation type="journal article" date="1997" name="Electrophoresis">
        <title>Escherichia coli proteome analysis using the gene-protein database.</title>
        <authorList>
            <person name="VanBogelen R.A."/>
            <person name="Abshire K.Z."/>
            <person name="Moldover B."/>
            <person name="Olson E.R."/>
            <person name="Neidhardt F.C."/>
        </authorList>
    </citation>
    <scope>IDENTIFICATION BY 2D-GEL</scope>
</reference>
<organism>
    <name type="scientific">Escherichia coli (strain K12)</name>
    <dbReference type="NCBI Taxonomy" id="83333"/>
    <lineage>
        <taxon>Bacteria</taxon>
        <taxon>Pseudomonadati</taxon>
        <taxon>Pseudomonadota</taxon>
        <taxon>Gammaproteobacteria</taxon>
        <taxon>Enterobacterales</taxon>
        <taxon>Enterobacteriaceae</taxon>
        <taxon>Escherichia</taxon>
    </lineage>
</organism>